<dbReference type="EMBL" id="BC118222">
    <property type="protein sequence ID" value="AAI18223.1"/>
    <property type="molecule type" value="mRNA"/>
</dbReference>
<dbReference type="RefSeq" id="NP_001068969.1">
    <property type="nucleotide sequence ID" value="NM_001075501.1"/>
</dbReference>
<dbReference type="SMR" id="Q17QR4"/>
<dbReference type="FunCoup" id="Q17QR4">
    <property type="interactions" value="2817"/>
</dbReference>
<dbReference type="STRING" id="9913.ENSBTAP00000034619"/>
<dbReference type="PaxDb" id="9913-ENSBTAP00000034619"/>
<dbReference type="Ensembl" id="ENSBTAT00000034734.3">
    <property type="protein sequence ID" value="ENSBTAP00000034619.2"/>
    <property type="gene ID" value="ENSBTAG00000000356.4"/>
</dbReference>
<dbReference type="GeneID" id="511225"/>
<dbReference type="KEGG" id="bta:511225"/>
<dbReference type="CTD" id="339230"/>
<dbReference type="VEuPathDB" id="HostDB:ENSBTAG00000000356"/>
<dbReference type="VGNC" id="VGNC:26849">
    <property type="gene designation" value="CCDC137"/>
</dbReference>
<dbReference type="eggNOG" id="ENOG502S2F4">
    <property type="taxonomic scope" value="Eukaryota"/>
</dbReference>
<dbReference type="GeneTree" id="ENSGT00390000004169"/>
<dbReference type="HOGENOM" id="CLU_079794_0_0_1"/>
<dbReference type="InParanoid" id="Q17QR4"/>
<dbReference type="OMA" id="HHGVRDP"/>
<dbReference type="OrthoDB" id="5876637at2759"/>
<dbReference type="TreeFam" id="TF332311"/>
<dbReference type="Proteomes" id="UP000009136">
    <property type="component" value="Chromosome 19"/>
</dbReference>
<dbReference type="Bgee" id="ENSBTAG00000000356">
    <property type="expression patterns" value="Expressed in temporal cortex and 105 other cell types or tissues"/>
</dbReference>
<dbReference type="GO" id="GO:0005694">
    <property type="term" value="C:chromosome"/>
    <property type="evidence" value="ECO:0000250"/>
    <property type="project" value="UniProtKB"/>
</dbReference>
<dbReference type="GO" id="GO:0005730">
    <property type="term" value="C:nucleolus"/>
    <property type="evidence" value="ECO:0007669"/>
    <property type="project" value="Ensembl"/>
</dbReference>
<dbReference type="GO" id="GO:0005654">
    <property type="term" value="C:nucleoplasm"/>
    <property type="evidence" value="ECO:0007669"/>
    <property type="project" value="Ensembl"/>
</dbReference>
<dbReference type="GO" id="GO:0005634">
    <property type="term" value="C:nucleus"/>
    <property type="evidence" value="ECO:0000318"/>
    <property type="project" value="GO_Central"/>
</dbReference>
<dbReference type="InterPro" id="IPR026680">
    <property type="entry name" value="CCDC137"/>
</dbReference>
<dbReference type="PANTHER" id="PTHR21838">
    <property type="entry name" value="COILED-COIL DOMAIN-CONTAINING PROTEIN 137"/>
    <property type="match status" value="1"/>
</dbReference>
<dbReference type="PANTHER" id="PTHR21838:SF2">
    <property type="entry name" value="COILED-COIL DOMAIN-CONTAINING PROTEIN 137"/>
    <property type="match status" value="1"/>
</dbReference>
<proteinExistence type="evidence at transcript level"/>
<reference key="1">
    <citation type="submission" date="2006-06" db="EMBL/GenBank/DDBJ databases">
        <authorList>
            <consortium name="NIH - Mammalian Gene Collection (MGC) project"/>
        </authorList>
    </citation>
    <scope>NUCLEOTIDE SEQUENCE [LARGE SCALE MRNA]</scope>
    <source>
        <strain>Hereford</strain>
        <tissue>Hippocampus</tissue>
    </source>
</reference>
<feature type="chain" id="PRO_0000288451" description="Coiled-coil domain-containing protein 137">
    <location>
        <begin position="1"/>
        <end position="292"/>
    </location>
</feature>
<feature type="region of interest" description="Disordered" evidence="3">
    <location>
        <begin position="1"/>
        <end position="94"/>
    </location>
</feature>
<feature type="region of interest" description="Disordered" evidence="3">
    <location>
        <begin position="139"/>
        <end position="183"/>
    </location>
</feature>
<feature type="region of interest" description="Disordered" evidence="3">
    <location>
        <begin position="205"/>
        <end position="243"/>
    </location>
</feature>
<feature type="region of interest" description="Disordered" evidence="3">
    <location>
        <begin position="263"/>
        <end position="292"/>
    </location>
</feature>
<feature type="coiled-coil region" evidence="2">
    <location>
        <begin position="156"/>
        <end position="194"/>
    </location>
</feature>
<feature type="coiled-coil region" evidence="2">
    <location>
        <begin position="247"/>
        <end position="276"/>
    </location>
</feature>
<feature type="compositionally biased region" description="Low complexity" evidence="3">
    <location>
        <begin position="1"/>
        <end position="16"/>
    </location>
</feature>
<feature type="compositionally biased region" description="Basic and acidic residues" evidence="3">
    <location>
        <begin position="57"/>
        <end position="78"/>
    </location>
</feature>
<feature type="compositionally biased region" description="Basic and acidic residues" evidence="3">
    <location>
        <begin position="155"/>
        <end position="164"/>
    </location>
</feature>
<feature type="compositionally biased region" description="Basic and acidic residues" evidence="3">
    <location>
        <begin position="173"/>
        <end position="183"/>
    </location>
</feature>
<feature type="compositionally biased region" description="Low complexity" evidence="3">
    <location>
        <begin position="222"/>
        <end position="232"/>
    </location>
</feature>
<feature type="compositionally biased region" description="Polar residues" evidence="3">
    <location>
        <begin position="234"/>
        <end position="243"/>
    </location>
</feature>
<feature type="modified residue" description="Phosphoserine" evidence="1">
    <location>
        <position position="232"/>
    </location>
</feature>
<gene>
    <name type="primary">CCDC137</name>
</gene>
<sequence>MAGLRRGAAAVAPAGTAGFGRPGRPQGRRQQELGKQRAAPRPGPRSKEKKKVNCKPKNQDEQEIPFRLREIMRSRQEMKNPISNKKRKKEAQAAFSKTLEKEAKGVEPDIAIPKFKQRKWESDRAYVRRMEQEAQHVLFLSKNQANRQPEVQAAPKKEKSERKKAFQKRRLDKARQRREEKAAERLEQELLQDTVKFGEVVLQPPELTAKPRMSVSRDQPGKKSLMLKKLLSPGSVSQPLTTSLARQRIVAEERERAVNAYRALKRLQQQRQETQSPQPPHLPPGKKPEMQL</sequence>
<comment type="subcellular location">
    <subcellularLocation>
        <location evidence="1">Chromosome</location>
    </subcellularLocation>
</comment>
<evidence type="ECO:0000250" key="1">
    <source>
        <dbReference type="UniProtKB" id="Q6PK04"/>
    </source>
</evidence>
<evidence type="ECO:0000255" key="2"/>
<evidence type="ECO:0000256" key="3">
    <source>
        <dbReference type="SAM" id="MobiDB-lite"/>
    </source>
</evidence>
<name>CC137_BOVIN</name>
<organism>
    <name type="scientific">Bos taurus</name>
    <name type="common">Bovine</name>
    <dbReference type="NCBI Taxonomy" id="9913"/>
    <lineage>
        <taxon>Eukaryota</taxon>
        <taxon>Metazoa</taxon>
        <taxon>Chordata</taxon>
        <taxon>Craniata</taxon>
        <taxon>Vertebrata</taxon>
        <taxon>Euteleostomi</taxon>
        <taxon>Mammalia</taxon>
        <taxon>Eutheria</taxon>
        <taxon>Laurasiatheria</taxon>
        <taxon>Artiodactyla</taxon>
        <taxon>Ruminantia</taxon>
        <taxon>Pecora</taxon>
        <taxon>Bovidae</taxon>
        <taxon>Bovinae</taxon>
        <taxon>Bos</taxon>
    </lineage>
</organism>
<keyword id="KW-0158">Chromosome</keyword>
<keyword id="KW-0175">Coiled coil</keyword>
<keyword id="KW-0597">Phosphoprotein</keyword>
<keyword id="KW-1185">Reference proteome</keyword>
<protein>
    <recommendedName>
        <fullName>Coiled-coil domain-containing protein 137</fullName>
    </recommendedName>
</protein>
<accession>Q17QR4</accession>